<evidence type="ECO:0000255" key="1">
    <source>
        <dbReference type="HAMAP-Rule" id="MF_00014"/>
    </source>
</evidence>
<organism>
    <name type="scientific">Psychrobacter arcticus (strain DSM 17307 / VKM B-2377 / 273-4)</name>
    <dbReference type="NCBI Taxonomy" id="259536"/>
    <lineage>
        <taxon>Bacteria</taxon>
        <taxon>Pseudomonadati</taxon>
        <taxon>Pseudomonadota</taxon>
        <taxon>Gammaproteobacteria</taxon>
        <taxon>Moraxellales</taxon>
        <taxon>Moraxellaceae</taxon>
        <taxon>Psychrobacter</taxon>
    </lineage>
</organism>
<proteinExistence type="inferred from homology"/>
<reference key="1">
    <citation type="journal article" date="2010" name="Appl. Environ. Microbiol.">
        <title>The genome sequence of Psychrobacter arcticus 273-4, a psychroactive Siberian permafrost bacterium, reveals mechanisms for adaptation to low-temperature growth.</title>
        <authorList>
            <person name="Ayala-del-Rio H.L."/>
            <person name="Chain P.S."/>
            <person name="Grzymski J.J."/>
            <person name="Ponder M.A."/>
            <person name="Ivanova N."/>
            <person name="Bergholz P.W."/>
            <person name="Di Bartolo G."/>
            <person name="Hauser L."/>
            <person name="Land M."/>
            <person name="Bakermans C."/>
            <person name="Rodrigues D."/>
            <person name="Klappenbach J."/>
            <person name="Zarka D."/>
            <person name="Larimer F."/>
            <person name="Richardson P."/>
            <person name="Murray A."/>
            <person name="Thomashow M."/>
            <person name="Tiedje J.M."/>
        </authorList>
    </citation>
    <scope>NUCLEOTIDE SEQUENCE [LARGE SCALE GENOMIC DNA]</scope>
    <source>
        <strain>DSM 17307 / VKM B-2377 / 273-4</strain>
    </source>
</reference>
<sequence>MSSAPNASALMKIGQLKKPYGIKGWLWVFSETDDRTAIFDIKPWWMKTATGMKPLTVKAWRQQGTGVVAQFEQIPDRNVAETMNGVTLWVEQDILPEPAEDEYYWSDLVTLRVINEQDEYLGDITEMFETGAHAIMRVAATSDSLDKEERLIPWHKQTVVKVDLTEKTVLVAWPSDY</sequence>
<comment type="function">
    <text evidence="1">An accessory protein needed during the final step in the assembly of 30S ribosomal subunit, possibly for assembly of the head region. Essential for efficient processing of 16S rRNA. May be needed both before and after RbfA during the maturation of 16S rRNA. It has affinity for free ribosomal 30S subunits but not for 70S ribosomes.</text>
</comment>
<comment type="subunit">
    <text evidence="1">Binds ribosomal protein uS19.</text>
</comment>
<comment type="subcellular location">
    <subcellularLocation>
        <location evidence="1">Cytoplasm</location>
    </subcellularLocation>
</comment>
<comment type="domain">
    <text evidence="1">The PRC barrel domain binds ribosomal protein uS19.</text>
</comment>
<comment type="similarity">
    <text evidence="1">Belongs to the RimM family.</text>
</comment>
<dbReference type="EMBL" id="CP000082">
    <property type="protein sequence ID" value="AAZ19865.1"/>
    <property type="molecule type" value="Genomic_DNA"/>
</dbReference>
<dbReference type="RefSeq" id="WP_011281273.1">
    <property type="nucleotide sequence ID" value="NC_007204.1"/>
</dbReference>
<dbReference type="SMR" id="Q4FQ43"/>
<dbReference type="STRING" id="259536.Psyc_2018"/>
<dbReference type="KEGG" id="par:Psyc_2018"/>
<dbReference type="eggNOG" id="COG0806">
    <property type="taxonomic scope" value="Bacteria"/>
</dbReference>
<dbReference type="HOGENOM" id="CLU_077636_1_0_6"/>
<dbReference type="OrthoDB" id="9783509at2"/>
<dbReference type="Proteomes" id="UP000000546">
    <property type="component" value="Chromosome"/>
</dbReference>
<dbReference type="GO" id="GO:0005737">
    <property type="term" value="C:cytoplasm"/>
    <property type="evidence" value="ECO:0007669"/>
    <property type="project" value="UniProtKB-SubCell"/>
</dbReference>
<dbReference type="GO" id="GO:0005840">
    <property type="term" value="C:ribosome"/>
    <property type="evidence" value="ECO:0007669"/>
    <property type="project" value="InterPro"/>
</dbReference>
<dbReference type="GO" id="GO:0043022">
    <property type="term" value="F:ribosome binding"/>
    <property type="evidence" value="ECO:0007669"/>
    <property type="project" value="InterPro"/>
</dbReference>
<dbReference type="GO" id="GO:0042274">
    <property type="term" value="P:ribosomal small subunit biogenesis"/>
    <property type="evidence" value="ECO:0007669"/>
    <property type="project" value="UniProtKB-UniRule"/>
</dbReference>
<dbReference type="GO" id="GO:0006364">
    <property type="term" value="P:rRNA processing"/>
    <property type="evidence" value="ECO:0007669"/>
    <property type="project" value="UniProtKB-UniRule"/>
</dbReference>
<dbReference type="Gene3D" id="2.30.30.240">
    <property type="entry name" value="PRC-barrel domain"/>
    <property type="match status" value="1"/>
</dbReference>
<dbReference type="Gene3D" id="2.40.30.60">
    <property type="entry name" value="RimM"/>
    <property type="match status" value="1"/>
</dbReference>
<dbReference type="HAMAP" id="MF_00014">
    <property type="entry name" value="Ribosome_mat_RimM"/>
    <property type="match status" value="1"/>
</dbReference>
<dbReference type="InterPro" id="IPR011033">
    <property type="entry name" value="PRC_barrel-like_sf"/>
</dbReference>
<dbReference type="InterPro" id="IPR056792">
    <property type="entry name" value="PRC_RimM"/>
</dbReference>
<dbReference type="InterPro" id="IPR011961">
    <property type="entry name" value="RimM"/>
</dbReference>
<dbReference type="InterPro" id="IPR002676">
    <property type="entry name" value="RimM_N"/>
</dbReference>
<dbReference type="InterPro" id="IPR036976">
    <property type="entry name" value="RimM_N_sf"/>
</dbReference>
<dbReference type="InterPro" id="IPR009000">
    <property type="entry name" value="Transl_B-barrel_sf"/>
</dbReference>
<dbReference type="NCBIfam" id="TIGR02273">
    <property type="entry name" value="16S_RimM"/>
    <property type="match status" value="1"/>
</dbReference>
<dbReference type="PANTHER" id="PTHR33692">
    <property type="entry name" value="RIBOSOME MATURATION FACTOR RIMM"/>
    <property type="match status" value="1"/>
</dbReference>
<dbReference type="PANTHER" id="PTHR33692:SF1">
    <property type="entry name" value="RIBOSOME MATURATION FACTOR RIMM"/>
    <property type="match status" value="1"/>
</dbReference>
<dbReference type="Pfam" id="PF24986">
    <property type="entry name" value="PRC_RimM"/>
    <property type="match status" value="1"/>
</dbReference>
<dbReference type="Pfam" id="PF01782">
    <property type="entry name" value="RimM"/>
    <property type="match status" value="1"/>
</dbReference>
<dbReference type="SUPFAM" id="SSF50346">
    <property type="entry name" value="PRC-barrel domain"/>
    <property type="match status" value="1"/>
</dbReference>
<dbReference type="SUPFAM" id="SSF50447">
    <property type="entry name" value="Translation proteins"/>
    <property type="match status" value="1"/>
</dbReference>
<name>RIMM_PSYA2</name>
<feature type="chain" id="PRO_0000244152" description="Ribosome maturation factor RimM">
    <location>
        <begin position="1"/>
        <end position="177"/>
    </location>
</feature>
<feature type="domain" description="PRC barrel" evidence="1">
    <location>
        <begin position="100"/>
        <end position="177"/>
    </location>
</feature>
<accession>Q4FQ43</accession>
<gene>
    <name evidence="1" type="primary">rimM</name>
    <name type="ordered locus">Psyc_2018</name>
</gene>
<keyword id="KW-0143">Chaperone</keyword>
<keyword id="KW-0963">Cytoplasm</keyword>
<keyword id="KW-1185">Reference proteome</keyword>
<keyword id="KW-0690">Ribosome biogenesis</keyword>
<keyword id="KW-0698">rRNA processing</keyword>
<protein>
    <recommendedName>
        <fullName evidence="1">Ribosome maturation factor RimM</fullName>
    </recommendedName>
</protein>